<protein>
    <recommendedName>
        <fullName>Eukaryotic initiation factor 4A-III</fullName>
        <shortName>eIF-4A-III</shortName>
        <shortName>eIF4A-III</shortName>
        <ecNumber evidence="1">3.6.4.13</ecNumber>
    </recommendedName>
    <alternativeName>
        <fullName>ATP-dependent RNA helicase DDX48</fullName>
    </alternativeName>
    <alternativeName>
        <fullName>ATP-dependent RNA helicase eIF4A-3</fullName>
    </alternativeName>
    <alternativeName>
        <fullName>DEAD box protein 48</fullName>
    </alternativeName>
    <alternativeName>
        <fullName>Eukaryotic translation initiation factor 4A isoform 3</fullName>
    </alternativeName>
    <component>
        <recommendedName>
            <fullName>Eukaryotic initiation factor 4A-III, N-terminally processed</fullName>
        </recommendedName>
    </component>
</protein>
<evidence type="ECO:0000250" key="1">
    <source>
        <dbReference type="UniProtKB" id="P38919"/>
    </source>
</evidence>
<evidence type="ECO:0000250" key="2">
    <source>
        <dbReference type="UniProtKB" id="P60842"/>
    </source>
</evidence>
<evidence type="ECO:0000250" key="3">
    <source>
        <dbReference type="UniProtKB" id="P60843"/>
    </source>
</evidence>
<evidence type="ECO:0000250" key="4">
    <source>
        <dbReference type="UniProtKB" id="Q3B8Q2"/>
    </source>
</evidence>
<evidence type="ECO:0000255" key="5">
    <source>
        <dbReference type="PROSITE-ProRule" id="PRU00541"/>
    </source>
</evidence>
<evidence type="ECO:0000255" key="6">
    <source>
        <dbReference type="PROSITE-ProRule" id="PRU00542"/>
    </source>
</evidence>
<evidence type="ECO:0000305" key="7"/>
<comment type="function">
    <text evidence="1">ATP-dependent RNA helicase. Involved in pre-mRNA splicing as component of the spliceosome. Core component of the splicing-dependent multiprotein exon junction complex (EJC) deposited at splice junctions on mRNAs. The EJC is a dynamic structure consisting of core proteins and several peripheral nuclear and cytoplasmic associated factors that join the complex only transiently either during EJC assembly or during subsequent mRNA metabolism. The EJC marks the position of the exon-exon junction in the mature mRNA for the gene expression machinery and the core components remain bound to spliced mRNAs throughout all stages of mRNA metabolism thereby influencing downstream processes including nuclear mRNA export, subcellular mRNA localization, translation efficiency and nonsense-mediated mRNA decay (NMD). Its RNA-dependent ATPase and RNA-helicase activities are induced by CASC3, but abolished in presence of the MAGOH-RBM8A heterodimer, thereby trapping the ATP-bound EJC core onto spliced mRNA in a stable conformation. The inhibition of ATPase activity by the MAGOH-RBM8A heterodimer increases the RNA-binding affinity of the EJC. Involved in translational enhancement of spliced mRNAs after formation of the 80S ribosome complex. Binds spliced mRNA in sequence-independent manner, 20-24 nucleotides upstream of mRNA exon-exon junctions. Shows higher affinity for single-stranded RNA in an ATP-bound core EJC complex than after the ATP is hydrolyzed. Involved in the splicing modulation of BCL2L1/Bcl-X (and probably other apoptotic genes); specifically inhibits formation of proapoptotic isoforms; the function is different from the established EJC assembly. Involved in craniofacial development.</text>
</comment>
<comment type="catalytic activity">
    <reaction evidence="1">
        <text>ATP + H2O = ADP + phosphate + H(+)</text>
        <dbReference type="Rhea" id="RHEA:13065"/>
        <dbReference type="ChEBI" id="CHEBI:15377"/>
        <dbReference type="ChEBI" id="CHEBI:15378"/>
        <dbReference type="ChEBI" id="CHEBI:30616"/>
        <dbReference type="ChEBI" id="CHEBI:43474"/>
        <dbReference type="ChEBI" id="CHEBI:456216"/>
        <dbReference type="EC" id="3.6.4.13"/>
    </reaction>
</comment>
<comment type="activity regulation">
    <text evidence="1">The ATPase activity is increased some 4-fold in the presence of RNA.</text>
</comment>
<comment type="subunit">
    <text evidence="1">Identified in the spliceosome C complex. Core component of the mRNA splicing-dependent exon junction complex (EJC); the core complex contains CASC3, EIF4A3, MAGOH or MAGOHB, and RBM8A. Interacts with CASC3, MAGOH, NXF1, RBM8A and ALYREF/THOC4. Component of the ALYREF/THOC4-EJC-RNA complex; in the complex interacts with MAGOH, RBM8A and THOC4 (via the WXHD motif); these interactions are likely specific to RNA-bound EJC (By similarity). May interact with NOM1. Interacts with POLDIP3. Interacts with CWC22 and PRPF19 in an RNA-independent manner. Direct interaction with CWC22 is mediated by the helicase C-terminal domain. Full interaction with CWC22 occurs only when EIF4A3 is not part of the EJC and prevents EIF4A3 binding to RNA. Identified in a complex composed of the EJC core, UPF3B and UPF2. The EJC core can also interact with UPF3A (in vitro). Interacts with NCBP3 (By similarity). Interacts with NRDE2 (By similarity). Interacts with DHX34; the interaction is RNA-independent (By similarity).</text>
</comment>
<comment type="subcellular location">
    <subcellularLocation>
        <location evidence="4">Nucleus</location>
    </subcellularLocation>
    <subcellularLocation>
        <location evidence="1">Nucleus speckle</location>
    </subcellularLocation>
    <subcellularLocation>
        <location evidence="4">Cytoplasm</location>
    </subcellularLocation>
    <text evidence="4">Nucleocytoplasmic shuttling protein. Travels to the cytoplasm as part of the exon junction complex (EJC) bound to mRNA. Detected in dendritic layer as well as the nuclear and cytoplasmic (somatic) compartments of neurons. Colocalizes with STAU1 and FMR1 in dendrites.</text>
</comment>
<comment type="similarity">
    <text evidence="7">Belongs to the DEAD box helicase family. eIF4A subfamily.</text>
</comment>
<organism>
    <name type="scientific">Macaca fascicularis</name>
    <name type="common">Crab-eating macaque</name>
    <name type="synonym">Cynomolgus monkey</name>
    <dbReference type="NCBI Taxonomy" id="9541"/>
    <lineage>
        <taxon>Eukaryota</taxon>
        <taxon>Metazoa</taxon>
        <taxon>Chordata</taxon>
        <taxon>Craniata</taxon>
        <taxon>Vertebrata</taxon>
        <taxon>Euteleostomi</taxon>
        <taxon>Mammalia</taxon>
        <taxon>Eutheria</taxon>
        <taxon>Euarchontoglires</taxon>
        <taxon>Primates</taxon>
        <taxon>Haplorrhini</taxon>
        <taxon>Catarrhini</taxon>
        <taxon>Cercopithecidae</taxon>
        <taxon>Cercopithecinae</taxon>
        <taxon>Macaca</taxon>
    </lineage>
</organism>
<reference key="1">
    <citation type="submission" date="2005-06" db="EMBL/GenBank/DDBJ databases">
        <title>DNA sequences of macaque genes expressed in brain or testis and its evolutionary implications.</title>
        <authorList>
            <consortium name="International consortium for macaque cDNA sequencing and analysis"/>
        </authorList>
    </citation>
    <scope>NUCLEOTIDE SEQUENCE [LARGE SCALE MRNA]</scope>
    <source>
        <tissue>Testis</tissue>
    </source>
</reference>
<sequence>MATTATMATSGSARKRLLKEEDMTKVEFETSEEVDVTPTFDTMGLREDLLRGIYAYGFEKPSAIQQRAIKQIIKGRDVIAQSQSGTGKTATFSISVLQCLDIQVRETQALILAPARELAVQIQKGLLTLGDYMNVQCHACIGGTNVGEDIRKLDYGQHVVAGTPGRVFDMIRRRSLRTRAIKMLVLDEADEMLNKGFKEQIYDVYRYLPPATQVVLISATLPHEILEMTNKFMTDPIRILVKRDELTLEGIKQFFVAVEREEWKFDTLCDLYDTLTITQAVIFCNTKRKVDWLTEKMREANFTVSSMHGDMPQKERESIMKEFRSGASRVLISTDVWARGLDVPQVSLIINYDLPNNRELYIHRIGRSGRYGRKGVAINFVKNDDIRILRDIEQYYSTQIDEMPMNVADLI</sequence>
<name>IF4A3_MACFA</name>
<gene>
    <name type="primary">EIF4A3</name>
    <name type="synonym">DDX48</name>
    <name type="ORF">QtsA-15322</name>
</gene>
<dbReference type="EC" id="3.6.4.13" evidence="1"/>
<dbReference type="EMBL" id="AB179214">
    <property type="protein sequence ID" value="BAE02265.1"/>
    <property type="molecule type" value="mRNA"/>
</dbReference>
<dbReference type="RefSeq" id="NP_001271847.1">
    <property type="nucleotide sequence ID" value="NM_001284918.1"/>
</dbReference>
<dbReference type="SMR" id="Q4R3Q1"/>
<dbReference type="STRING" id="9541.ENSMFAP00000024558"/>
<dbReference type="eggNOG" id="KOG0328">
    <property type="taxonomic scope" value="Eukaryota"/>
</dbReference>
<dbReference type="Proteomes" id="UP000233100">
    <property type="component" value="Unplaced"/>
</dbReference>
<dbReference type="GO" id="GO:0005737">
    <property type="term" value="C:cytoplasm"/>
    <property type="evidence" value="ECO:0007669"/>
    <property type="project" value="UniProtKB-SubCell"/>
</dbReference>
<dbReference type="GO" id="GO:0016607">
    <property type="term" value="C:nuclear speck"/>
    <property type="evidence" value="ECO:0007669"/>
    <property type="project" value="UniProtKB-SubCell"/>
</dbReference>
<dbReference type="GO" id="GO:0005634">
    <property type="term" value="C:nucleus"/>
    <property type="evidence" value="ECO:0000250"/>
    <property type="project" value="UniProtKB"/>
</dbReference>
<dbReference type="GO" id="GO:0071006">
    <property type="term" value="C:U2-type catalytic step 1 spliceosome"/>
    <property type="evidence" value="ECO:0000250"/>
    <property type="project" value="UniProtKB"/>
</dbReference>
<dbReference type="GO" id="GO:0005524">
    <property type="term" value="F:ATP binding"/>
    <property type="evidence" value="ECO:0007669"/>
    <property type="project" value="UniProtKB-KW"/>
</dbReference>
<dbReference type="GO" id="GO:0016887">
    <property type="term" value="F:ATP hydrolysis activity"/>
    <property type="evidence" value="ECO:0007669"/>
    <property type="project" value="RHEA"/>
</dbReference>
<dbReference type="GO" id="GO:0003723">
    <property type="term" value="F:RNA binding"/>
    <property type="evidence" value="ECO:0007669"/>
    <property type="project" value="UniProtKB-KW"/>
</dbReference>
<dbReference type="GO" id="GO:0003724">
    <property type="term" value="F:RNA helicase activity"/>
    <property type="evidence" value="ECO:0007669"/>
    <property type="project" value="UniProtKB-EC"/>
</dbReference>
<dbReference type="GO" id="GO:0048701">
    <property type="term" value="P:embryonic cranial skeleton morphogenesis"/>
    <property type="evidence" value="ECO:0000250"/>
    <property type="project" value="UniProtKB"/>
</dbReference>
<dbReference type="GO" id="GO:0000398">
    <property type="term" value="P:mRNA splicing, via spliceosome"/>
    <property type="evidence" value="ECO:0000250"/>
    <property type="project" value="UniProtKB"/>
</dbReference>
<dbReference type="GO" id="GO:0051028">
    <property type="term" value="P:mRNA transport"/>
    <property type="evidence" value="ECO:0007669"/>
    <property type="project" value="UniProtKB-KW"/>
</dbReference>
<dbReference type="GO" id="GO:0000184">
    <property type="term" value="P:nuclear-transcribed mRNA catabolic process, nonsense-mediated decay"/>
    <property type="evidence" value="ECO:0007669"/>
    <property type="project" value="UniProtKB-KW"/>
</dbReference>
<dbReference type="GO" id="GO:0000381">
    <property type="term" value="P:regulation of alternative mRNA splicing, via spliceosome"/>
    <property type="evidence" value="ECO:0000250"/>
    <property type="project" value="UniProtKB"/>
</dbReference>
<dbReference type="GO" id="GO:0006417">
    <property type="term" value="P:regulation of translation"/>
    <property type="evidence" value="ECO:0007669"/>
    <property type="project" value="UniProtKB-KW"/>
</dbReference>
<dbReference type="GO" id="GO:0006364">
    <property type="term" value="P:rRNA processing"/>
    <property type="evidence" value="ECO:0007669"/>
    <property type="project" value="UniProtKB-KW"/>
</dbReference>
<dbReference type="CDD" id="cd18045">
    <property type="entry name" value="DEADc_EIF4AIII_DDX48"/>
    <property type="match status" value="1"/>
</dbReference>
<dbReference type="CDD" id="cd18787">
    <property type="entry name" value="SF2_C_DEAD"/>
    <property type="match status" value="1"/>
</dbReference>
<dbReference type="FunFam" id="3.40.50.300:FF:000031">
    <property type="entry name" value="Eukaryotic initiation factor 4A-III"/>
    <property type="match status" value="1"/>
</dbReference>
<dbReference type="FunFam" id="3.40.50.300:FF:000498">
    <property type="entry name" value="Eukaryotic initiation factor 4A-III"/>
    <property type="match status" value="1"/>
</dbReference>
<dbReference type="Gene3D" id="3.40.50.300">
    <property type="entry name" value="P-loop containing nucleotide triphosphate hydrolases"/>
    <property type="match status" value="2"/>
</dbReference>
<dbReference type="InterPro" id="IPR011545">
    <property type="entry name" value="DEAD/DEAH_box_helicase_dom"/>
</dbReference>
<dbReference type="InterPro" id="IPR014001">
    <property type="entry name" value="Helicase_ATP-bd"/>
</dbReference>
<dbReference type="InterPro" id="IPR001650">
    <property type="entry name" value="Helicase_C-like"/>
</dbReference>
<dbReference type="InterPro" id="IPR027417">
    <property type="entry name" value="P-loop_NTPase"/>
</dbReference>
<dbReference type="InterPro" id="IPR000629">
    <property type="entry name" value="RNA-helicase_DEAD-box_CS"/>
</dbReference>
<dbReference type="InterPro" id="IPR014014">
    <property type="entry name" value="RNA_helicase_DEAD_Q_motif"/>
</dbReference>
<dbReference type="PANTHER" id="PTHR47958">
    <property type="entry name" value="ATP-DEPENDENT RNA HELICASE DBP3"/>
    <property type="match status" value="1"/>
</dbReference>
<dbReference type="Pfam" id="PF00270">
    <property type="entry name" value="DEAD"/>
    <property type="match status" value="1"/>
</dbReference>
<dbReference type="Pfam" id="PF00271">
    <property type="entry name" value="Helicase_C"/>
    <property type="match status" value="1"/>
</dbReference>
<dbReference type="SMART" id="SM00487">
    <property type="entry name" value="DEXDc"/>
    <property type="match status" value="1"/>
</dbReference>
<dbReference type="SMART" id="SM00490">
    <property type="entry name" value="HELICc"/>
    <property type="match status" value="1"/>
</dbReference>
<dbReference type="SUPFAM" id="SSF52540">
    <property type="entry name" value="P-loop containing nucleoside triphosphate hydrolases"/>
    <property type="match status" value="1"/>
</dbReference>
<dbReference type="PROSITE" id="PS00039">
    <property type="entry name" value="DEAD_ATP_HELICASE"/>
    <property type="match status" value="1"/>
</dbReference>
<dbReference type="PROSITE" id="PS51192">
    <property type="entry name" value="HELICASE_ATP_BIND_1"/>
    <property type="match status" value="1"/>
</dbReference>
<dbReference type="PROSITE" id="PS51194">
    <property type="entry name" value="HELICASE_CTER"/>
    <property type="match status" value="1"/>
</dbReference>
<dbReference type="PROSITE" id="PS51195">
    <property type="entry name" value="Q_MOTIF"/>
    <property type="match status" value="1"/>
</dbReference>
<proteinExistence type="evidence at transcript level"/>
<accession>Q4R3Q1</accession>
<keyword id="KW-0007">Acetylation</keyword>
<keyword id="KW-0067">ATP-binding</keyword>
<keyword id="KW-0963">Cytoplasm</keyword>
<keyword id="KW-0347">Helicase</keyword>
<keyword id="KW-0378">Hydrolase</keyword>
<keyword id="KW-1017">Isopeptide bond</keyword>
<keyword id="KW-0507">mRNA processing</keyword>
<keyword id="KW-0508">mRNA splicing</keyword>
<keyword id="KW-0509">mRNA transport</keyword>
<keyword id="KW-0866">Nonsense-mediated mRNA decay</keyword>
<keyword id="KW-0547">Nucleotide-binding</keyword>
<keyword id="KW-0539">Nucleus</keyword>
<keyword id="KW-0597">Phosphoprotein</keyword>
<keyword id="KW-1185">Reference proteome</keyword>
<keyword id="KW-0694">RNA-binding</keyword>
<keyword id="KW-0698">rRNA processing</keyword>
<keyword id="KW-0747">Spliceosome</keyword>
<keyword id="KW-0810">Translation regulation</keyword>
<keyword id="KW-0813">Transport</keyword>
<keyword id="KW-0832">Ubl conjugation</keyword>
<feature type="chain" id="PRO_0000423268" description="Eukaryotic initiation factor 4A-III">
    <location>
        <begin position="1"/>
        <end position="411"/>
    </location>
</feature>
<feature type="initiator methionine" description="Removed; alternate" evidence="1">
    <location>
        <position position="1"/>
    </location>
</feature>
<feature type="chain" id="PRO_0000054943" description="Eukaryotic initiation factor 4A-III, N-terminally processed">
    <location>
        <begin position="2"/>
        <end position="411"/>
    </location>
</feature>
<feature type="domain" description="Helicase ATP-binding" evidence="5">
    <location>
        <begin position="69"/>
        <end position="239"/>
    </location>
</feature>
<feature type="domain" description="Helicase C-terminal" evidence="6">
    <location>
        <begin position="250"/>
        <end position="411"/>
    </location>
</feature>
<feature type="short sequence motif" description="Q motif">
    <location>
        <begin position="38"/>
        <end position="66"/>
    </location>
</feature>
<feature type="short sequence motif" description="DEAD box" evidence="7">
    <location>
        <begin position="187"/>
        <end position="190"/>
    </location>
</feature>
<feature type="binding site" evidence="1">
    <location>
        <position position="60"/>
    </location>
    <ligand>
        <name>ATP</name>
        <dbReference type="ChEBI" id="CHEBI:30616"/>
    </ligand>
</feature>
<feature type="binding site" evidence="1">
    <location>
        <position position="65"/>
    </location>
    <ligand>
        <name>ATP</name>
        <dbReference type="ChEBI" id="CHEBI:30616"/>
    </ligand>
</feature>
<feature type="binding site" evidence="5">
    <location>
        <begin position="85"/>
        <end position="90"/>
    </location>
    <ligand>
        <name>ATP</name>
        <dbReference type="ChEBI" id="CHEBI:30616"/>
    </ligand>
</feature>
<feature type="binding site" evidence="1">
    <location>
        <position position="342"/>
    </location>
    <ligand>
        <name>ATP</name>
        <dbReference type="ChEBI" id="CHEBI:30616"/>
    </ligand>
</feature>
<feature type="binding site" evidence="5">
    <location>
        <begin position="367"/>
        <end position="371"/>
    </location>
    <ligand>
        <name>ATP</name>
        <dbReference type="ChEBI" id="CHEBI:30616"/>
    </ligand>
</feature>
<feature type="modified residue" description="N-acetylmethionine" evidence="1">
    <location>
        <position position="1"/>
    </location>
</feature>
<feature type="modified residue" description="N-acetylalanine; in Eukaryotic initiation factor 4A-III, N-terminally processed" evidence="1">
    <location>
        <position position="2"/>
    </location>
</feature>
<feature type="modified residue" description="Phosphoserine" evidence="2">
    <location>
        <position position="10"/>
    </location>
</feature>
<feature type="modified residue" description="Phosphoserine" evidence="1">
    <location>
        <position position="12"/>
    </location>
</feature>
<feature type="modified residue" description="N6-acetyllysine" evidence="2">
    <location>
        <position position="124"/>
    </location>
</feature>
<feature type="modified residue" description="Phosphothreonine" evidence="1">
    <location>
        <position position="163"/>
    </location>
</feature>
<feature type="modified residue" description="N6-acetyllysine" evidence="3">
    <location>
        <position position="198"/>
    </location>
</feature>
<feature type="modified residue" description="N6-acetyllysine" evidence="1">
    <location>
        <position position="296"/>
    </location>
</feature>
<feature type="modified residue" description="N6-acetyllysine" evidence="1">
    <location>
        <position position="321"/>
    </location>
</feature>
<feature type="cross-link" description="Glycyl lysine isopeptide (Lys-Gly) (interchain with G-Cter in SUMO2)" evidence="1">
    <location>
        <position position="19"/>
    </location>
</feature>
<feature type="cross-link" description="Glycyl lysine isopeptide (Lys-Gly) (interchain with G-Cter in SUMO2)" evidence="2">
    <location>
        <position position="152"/>
    </location>
</feature>
<feature type="cross-link" description="Glycyl lysine isopeptide (Lys-Gly) (interchain with G-Cter in SUMO2)" evidence="1">
    <location>
        <position position="314"/>
    </location>
</feature>
<feature type="cross-link" description="Glycyl lysine isopeptide (Lys-Gly) (interchain with G-Cter in SUMO2)" evidence="2">
    <location>
        <position position="374"/>
    </location>
</feature>
<feature type="cross-link" description="Glycyl lysine isopeptide (Lys-Gly) (interchain with G-Cter in SUMO2)" evidence="1">
    <location>
        <position position="382"/>
    </location>
</feature>